<proteinExistence type="inferred from homology"/>
<reference key="1">
    <citation type="journal article" date="2004" name="Nucleic Acids Res.">
        <title>Genome sequence of Symbiobacterium thermophilum, an uncultivable bacterium that depends on microbial commensalism.</title>
        <authorList>
            <person name="Ueda K."/>
            <person name="Yamashita A."/>
            <person name="Ishikawa J."/>
            <person name="Shimada M."/>
            <person name="Watsuji T."/>
            <person name="Morimura K."/>
            <person name="Ikeda H."/>
            <person name="Hattori M."/>
            <person name="Beppu T."/>
        </authorList>
    </citation>
    <scope>NUCLEOTIDE SEQUENCE [LARGE SCALE GENOMIC DNA]</scope>
    <source>
        <strain>DSM 24528 / JCM 14929 / IAM 14863 / T</strain>
    </source>
</reference>
<comment type="function">
    <text evidence="1">F(1)F(0) ATP synthase produces ATP from ADP in the presence of a proton or sodium gradient. F-type ATPases consist of two structural domains, F(1) containing the extramembraneous catalytic core and F(0) containing the membrane proton channel, linked together by a central stalk and a peripheral stalk. During catalysis, ATP synthesis in the catalytic domain of F(1) is coupled via a rotary mechanism of the central stalk subunits to proton translocation.</text>
</comment>
<comment type="function">
    <text evidence="1">Component of the F(0) channel, it forms part of the peripheral stalk, linking F(1) to F(0).</text>
</comment>
<comment type="subunit">
    <text evidence="1">F-type ATPases have 2 components, F(1) - the catalytic core - and F(0) - the membrane proton channel. F(1) has five subunits: alpha(3), beta(3), gamma(1), delta(1), epsilon(1). F(0) has three main subunits: a(1), b(2) and c(10-14). The alpha and beta chains form an alternating ring which encloses part of the gamma chain. F(1) is attached to F(0) by a central stalk formed by the gamma and epsilon chains, while a peripheral stalk is formed by the delta and b chains.</text>
</comment>
<comment type="subcellular location">
    <subcellularLocation>
        <location evidence="1">Cell membrane</location>
        <topology evidence="1">Single-pass membrane protein</topology>
    </subcellularLocation>
</comment>
<comment type="similarity">
    <text evidence="1">Belongs to the ATPase B chain family.</text>
</comment>
<feature type="chain" id="PRO_0000368822" description="ATP synthase subunit b">
    <location>
        <begin position="1"/>
        <end position="162"/>
    </location>
</feature>
<feature type="transmembrane region" description="Helical" evidence="1">
    <location>
        <begin position="10"/>
        <end position="29"/>
    </location>
</feature>
<organism>
    <name type="scientific">Symbiobacterium thermophilum (strain DSM 24528 / JCM 14929 / IAM 14863 / T)</name>
    <dbReference type="NCBI Taxonomy" id="292459"/>
    <lineage>
        <taxon>Bacteria</taxon>
        <taxon>Bacillati</taxon>
        <taxon>Bacillota</taxon>
        <taxon>Clostridia</taxon>
        <taxon>Eubacteriales</taxon>
        <taxon>Symbiobacteriaceae</taxon>
        <taxon>Symbiobacterium</taxon>
    </lineage>
</organism>
<dbReference type="EMBL" id="AP006840">
    <property type="protein sequence ID" value="BAD39072.1"/>
    <property type="molecule type" value="Genomic_DNA"/>
</dbReference>
<dbReference type="SMR" id="Q67TC1"/>
<dbReference type="STRING" id="292459.STH87"/>
<dbReference type="KEGG" id="sth:STH87"/>
<dbReference type="eggNOG" id="COG0711">
    <property type="taxonomic scope" value="Bacteria"/>
</dbReference>
<dbReference type="HOGENOM" id="CLU_079215_4_4_9"/>
<dbReference type="Proteomes" id="UP000000417">
    <property type="component" value="Chromosome"/>
</dbReference>
<dbReference type="GO" id="GO:0005886">
    <property type="term" value="C:plasma membrane"/>
    <property type="evidence" value="ECO:0007669"/>
    <property type="project" value="UniProtKB-SubCell"/>
</dbReference>
<dbReference type="GO" id="GO:0045259">
    <property type="term" value="C:proton-transporting ATP synthase complex"/>
    <property type="evidence" value="ECO:0007669"/>
    <property type="project" value="UniProtKB-KW"/>
</dbReference>
<dbReference type="GO" id="GO:0046933">
    <property type="term" value="F:proton-transporting ATP synthase activity, rotational mechanism"/>
    <property type="evidence" value="ECO:0007669"/>
    <property type="project" value="UniProtKB-UniRule"/>
</dbReference>
<dbReference type="GO" id="GO:0046961">
    <property type="term" value="F:proton-transporting ATPase activity, rotational mechanism"/>
    <property type="evidence" value="ECO:0007669"/>
    <property type="project" value="TreeGrafter"/>
</dbReference>
<dbReference type="CDD" id="cd06503">
    <property type="entry name" value="ATP-synt_Fo_b"/>
    <property type="match status" value="1"/>
</dbReference>
<dbReference type="Gene3D" id="1.20.5.620">
    <property type="entry name" value="F1F0 ATP synthase subunit B, membrane domain"/>
    <property type="match status" value="1"/>
</dbReference>
<dbReference type="HAMAP" id="MF_01398">
    <property type="entry name" value="ATP_synth_b_bprime"/>
    <property type="match status" value="1"/>
</dbReference>
<dbReference type="InterPro" id="IPR028987">
    <property type="entry name" value="ATP_synth_B-like_membr_sf"/>
</dbReference>
<dbReference type="InterPro" id="IPR002146">
    <property type="entry name" value="ATP_synth_b/b'su_bac/chlpt"/>
</dbReference>
<dbReference type="InterPro" id="IPR005864">
    <property type="entry name" value="ATP_synth_F0_bsu_bac"/>
</dbReference>
<dbReference type="InterPro" id="IPR050059">
    <property type="entry name" value="ATP_synthase_B_chain"/>
</dbReference>
<dbReference type="NCBIfam" id="TIGR01144">
    <property type="entry name" value="ATP_synt_b"/>
    <property type="match status" value="1"/>
</dbReference>
<dbReference type="PANTHER" id="PTHR33445:SF1">
    <property type="entry name" value="ATP SYNTHASE SUBUNIT B"/>
    <property type="match status" value="1"/>
</dbReference>
<dbReference type="PANTHER" id="PTHR33445">
    <property type="entry name" value="ATP SYNTHASE SUBUNIT B', CHLOROPLASTIC"/>
    <property type="match status" value="1"/>
</dbReference>
<dbReference type="Pfam" id="PF00430">
    <property type="entry name" value="ATP-synt_B"/>
    <property type="match status" value="1"/>
</dbReference>
<dbReference type="SUPFAM" id="SSF81573">
    <property type="entry name" value="F1F0 ATP synthase subunit B, membrane domain"/>
    <property type="match status" value="1"/>
</dbReference>
<keyword id="KW-0066">ATP synthesis</keyword>
<keyword id="KW-1003">Cell membrane</keyword>
<keyword id="KW-0138">CF(0)</keyword>
<keyword id="KW-0375">Hydrogen ion transport</keyword>
<keyword id="KW-0406">Ion transport</keyword>
<keyword id="KW-0472">Membrane</keyword>
<keyword id="KW-1185">Reference proteome</keyword>
<keyword id="KW-0812">Transmembrane</keyword>
<keyword id="KW-1133">Transmembrane helix</keyword>
<keyword id="KW-0813">Transport</keyword>
<gene>
    <name evidence="1" type="primary">atpF</name>
    <name type="ordered locus">STH87</name>
</gene>
<evidence type="ECO:0000255" key="1">
    <source>
        <dbReference type="HAMAP-Rule" id="MF_01398"/>
    </source>
</evidence>
<accession>Q67TC1</accession>
<protein>
    <recommendedName>
        <fullName evidence="1">ATP synthase subunit b</fullName>
    </recommendedName>
    <alternativeName>
        <fullName evidence="1">ATP synthase F(0) sector subunit b</fullName>
    </alternativeName>
    <alternativeName>
        <fullName evidence="1">ATPase subunit I</fullName>
    </alternativeName>
    <alternativeName>
        <fullName evidence="1">F-type ATPase subunit b</fullName>
        <shortName evidence="1">F-ATPase subunit b</shortName>
    </alternativeName>
</protein>
<name>ATPF_SYMTH</name>
<sequence length="162" mass="18356">MQIFPQTNELIWTIINFAVLLWGMHRFLYKPLLGAIQAREDEINANLKKAAEDRAEAERLRREFEAQIANAQREAQEIINKAVKNATAVKEQIEAEARARAAEILEQATQTIEREKAKAVAELRREVADLAVAVAGKVIEKSLDDAEHRRLADSFVTEVTKH</sequence>